<gene>
    <name type="primary">cblA-1</name>
    <name type="ORF">DDB_G0273141</name>
</gene>
<gene>
    <name type="primary">cblA-2</name>
    <name type="ORF">DDB_G0273609</name>
</gene>
<name>CBLA_DICDI</name>
<proteinExistence type="evidence at protein level"/>
<sequence>MNRATITSNKSNAPSFLSIPLLAHNNNINNNNNNINNNNNNNNINSNNNGTTTTTTTTTITTISYKNNISELITIIDKIIKDLNNFKSKTVLNDQEFSELNNTIQFTKTSLVNYIHYENENKINFNLSDSKIICSEIKIIEYGIESFIFSICKLYQDLIQFQQLLLKLSSPPTTITFNTTINSTNSFTSNLIINNLLKVDSILKQSIDQLLALFPPSSSSLNNENNNNNNNNYNPYELLSNEAKVLWNQFGGNKITFVPWSIFFKGFQKFFNKEILAYESSLRYTLDFTRDGYVTPFKLSVFIKWFGALPVSLGIFQDVINSKIFSGFISGIEATQLLSRQQVGYYLLRCSKTIVGAFAITFVDSTNHIRHCLLYPVTSSINGGLTLQKPPDIFKSILSFILSFSSKLKYPIGPLDNDLLPPLSIINNNPILILPDENNNNQNNNQNNNNNNINTFSTSPSSFFTIDSSNSSDTNKSPTKSRKSSFKNDKDKKEKEKEKGKDKEKEKERVSDENFDNLPTFLNSEDENDNNNNNNNNNNNNNNNNNNNNNNNNNNSSNNNNCNIKETHQTTSNGSSGNNNNNNNNNNNNNNNNNNNNSSSTTKRNNNNNGSDESKDLCTVCMDNEINTVFLECGHLSCCSLCSVKLKKCPICRSRITRVINIFKS</sequence>
<keyword id="KW-0106">Calcium</keyword>
<keyword id="KW-0175">Coiled coil</keyword>
<keyword id="KW-0963">Cytoplasm</keyword>
<keyword id="KW-0479">Metal-binding</keyword>
<keyword id="KW-0539">Nucleus</keyword>
<keyword id="KW-1185">Reference proteome</keyword>
<keyword id="KW-0808">Transferase</keyword>
<keyword id="KW-0832">Ubl conjugation</keyword>
<keyword id="KW-0833">Ubl conjugation pathway</keyword>
<keyword id="KW-0862">Zinc</keyword>
<keyword id="KW-0863">Zinc-finger</keyword>
<evidence type="ECO:0000250" key="1"/>
<evidence type="ECO:0000250" key="2">
    <source>
        <dbReference type="UniProtKB" id="P22681"/>
    </source>
</evidence>
<evidence type="ECO:0000255" key="3"/>
<evidence type="ECO:0000255" key="4">
    <source>
        <dbReference type="PROSITE-ProRule" id="PRU00175"/>
    </source>
</evidence>
<evidence type="ECO:0000255" key="5">
    <source>
        <dbReference type="PROSITE-ProRule" id="PRU00839"/>
    </source>
</evidence>
<evidence type="ECO:0000256" key="6">
    <source>
        <dbReference type="SAM" id="MobiDB-lite"/>
    </source>
</evidence>
<evidence type="ECO:0000269" key="7">
    <source>
    </source>
</evidence>
<evidence type="ECO:0000305" key="8"/>
<reference key="1">
    <citation type="journal article" date="2002" name="Nature">
        <title>Sequence and analysis of chromosome 2 of Dictyostelium discoideum.</title>
        <authorList>
            <person name="Gloeckner G."/>
            <person name="Eichinger L."/>
            <person name="Szafranski K."/>
            <person name="Pachebat J.A."/>
            <person name="Bankier A.T."/>
            <person name="Dear P.H."/>
            <person name="Lehmann R."/>
            <person name="Baumgart C."/>
            <person name="Parra G."/>
            <person name="Abril J.F."/>
            <person name="Guigo R."/>
            <person name="Kumpf K."/>
            <person name="Tunggal B."/>
            <person name="Cox E.C."/>
            <person name="Quail M.A."/>
            <person name="Platzer M."/>
            <person name="Rosenthal A."/>
            <person name="Noegel A.A."/>
        </authorList>
    </citation>
    <scope>NUCLEOTIDE SEQUENCE [LARGE SCALE GENOMIC DNA]</scope>
    <source>
        <strain>AX4</strain>
    </source>
</reference>
<reference key="2">
    <citation type="journal article" date="2005" name="Nature">
        <title>The genome of the social amoeba Dictyostelium discoideum.</title>
        <authorList>
            <person name="Eichinger L."/>
            <person name="Pachebat J.A."/>
            <person name="Gloeckner G."/>
            <person name="Rajandream M.A."/>
            <person name="Sucgang R."/>
            <person name="Berriman M."/>
            <person name="Song J."/>
            <person name="Olsen R."/>
            <person name="Szafranski K."/>
            <person name="Xu Q."/>
            <person name="Tunggal B."/>
            <person name="Kummerfeld S."/>
            <person name="Madera M."/>
            <person name="Konfortov B.A."/>
            <person name="Rivero F."/>
            <person name="Bankier A.T."/>
            <person name="Lehmann R."/>
            <person name="Hamlin N."/>
            <person name="Davies R."/>
            <person name="Gaudet P."/>
            <person name="Fey P."/>
            <person name="Pilcher K."/>
            <person name="Chen G."/>
            <person name="Saunders D."/>
            <person name="Sodergren E.J."/>
            <person name="Davis P."/>
            <person name="Kerhornou A."/>
            <person name="Nie X."/>
            <person name="Hall N."/>
            <person name="Anjard C."/>
            <person name="Hemphill L."/>
            <person name="Bason N."/>
            <person name="Farbrother P."/>
            <person name="Desany B."/>
            <person name="Just E."/>
            <person name="Morio T."/>
            <person name="Rost R."/>
            <person name="Churcher C.M."/>
            <person name="Cooper J."/>
            <person name="Haydock S."/>
            <person name="van Driessche N."/>
            <person name="Cronin A."/>
            <person name="Goodhead I."/>
            <person name="Muzny D.M."/>
            <person name="Mourier T."/>
            <person name="Pain A."/>
            <person name="Lu M."/>
            <person name="Harper D."/>
            <person name="Lindsay R."/>
            <person name="Hauser H."/>
            <person name="James K.D."/>
            <person name="Quiles M."/>
            <person name="Madan Babu M."/>
            <person name="Saito T."/>
            <person name="Buchrieser C."/>
            <person name="Wardroper A."/>
            <person name="Felder M."/>
            <person name="Thangavelu M."/>
            <person name="Johnson D."/>
            <person name="Knights A."/>
            <person name="Loulseged H."/>
            <person name="Mungall K.L."/>
            <person name="Oliver K."/>
            <person name="Price C."/>
            <person name="Quail M.A."/>
            <person name="Urushihara H."/>
            <person name="Hernandez J."/>
            <person name="Rabbinowitsch E."/>
            <person name="Steffen D."/>
            <person name="Sanders M."/>
            <person name="Ma J."/>
            <person name="Kohara Y."/>
            <person name="Sharp S."/>
            <person name="Simmonds M.N."/>
            <person name="Spiegler S."/>
            <person name="Tivey A."/>
            <person name="Sugano S."/>
            <person name="White B."/>
            <person name="Walker D."/>
            <person name="Woodward J.R."/>
            <person name="Winckler T."/>
            <person name="Tanaka Y."/>
            <person name="Shaulsky G."/>
            <person name="Schleicher M."/>
            <person name="Weinstock G.M."/>
            <person name="Rosenthal A."/>
            <person name="Cox E.C."/>
            <person name="Chisholm R.L."/>
            <person name="Gibbs R.A."/>
            <person name="Loomis W.F."/>
            <person name="Platzer M."/>
            <person name="Kay R.R."/>
            <person name="Williams J.G."/>
            <person name="Dear P.H."/>
            <person name="Noegel A.A."/>
            <person name="Barrell B.G."/>
            <person name="Kuspa A."/>
        </authorList>
    </citation>
    <scope>NUCLEOTIDE SEQUENCE [LARGE SCALE GENOMIC DNA]</scope>
    <source>
        <strain>AX4</strain>
    </source>
</reference>
<reference key="3">
    <citation type="journal article" date="2008" name="J. Cell Sci.">
        <title>A Dictyostelium homologue of the metazoan Cbl proteins regulates STAT signalling.</title>
        <authorList>
            <person name="Langenick J."/>
            <person name="Araki T."/>
            <person name="Yamada Y."/>
            <person name="Williams J.G."/>
        </authorList>
    </citation>
    <scope>DISRUPTION PHENOTYPE</scope>
    <scope>FUNCTION</scope>
    <scope>DEVELOPMENTAL STAGE</scope>
    <scope>SUBCELLULAR LOCATION</scope>
</reference>
<accession>Q557E7</accession>
<accession>Q86HZ3</accession>
<feature type="chain" id="PRO_0000384443" description="E3 ubiquitin-protein ligase cblA">
    <location>
        <begin position="1"/>
        <end position="665"/>
    </location>
</feature>
<feature type="domain" description="Cbl-PTB" evidence="5">
    <location>
        <begin position="109"/>
        <end position="400"/>
    </location>
</feature>
<feature type="zinc finger region" description="RING-type" evidence="4">
    <location>
        <begin position="618"/>
        <end position="653"/>
    </location>
</feature>
<feature type="region of interest" description="Disordered" evidence="6">
    <location>
        <begin position="30"/>
        <end position="50"/>
    </location>
</feature>
<feature type="region of interest" description="4H">
    <location>
        <begin position="109"/>
        <end position="231"/>
    </location>
</feature>
<feature type="region of interest" description="EF-hand-like">
    <location>
        <begin position="232"/>
        <end position="306"/>
    </location>
</feature>
<feature type="region of interest" description="SH2-like">
    <location>
        <begin position="307"/>
        <end position="400"/>
    </location>
</feature>
<feature type="region of interest" description="Disordered" evidence="6">
    <location>
        <begin position="437"/>
        <end position="456"/>
    </location>
</feature>
<feature type="region of interest" description="Disordered" evidence="6">
    <location>
        <begin position="467"/>
        <end position="609"/>
    </location>
</feature>
<feature type="coiled-coil region" evidence="3">
    <location>
        <begin position="479"/>
        <end position="544"/>
    </location>
</feature>
<feature type="compositionally biased region" description="Low complexity" evidence="6">
    <location>
        <begin position="467"/>
        <end position="478"/>
    </location>
</feature>
<feature type="compositionally biased region" description="Basic and acidic residues" evidence="6">
    <location>
        <begin position="486"/>
        <end position="512"/>
    </location>
</feature>
<feature type="compositionally biased region" description="Low complexity" evidence="6">
    <location>
        <begin position="530"/>
        <end position="561"/>
    </location>
</feature>
<feature type="compositionally biased region" description="Low complexity" evidence="6">
    <location>
        <begin position="571"/>
        <end position="609"/>
    </location>
</feature>
<feature type="binding site" evidence="2">
    <location>
        <position position="287"/>
    </location>
    <ligand>
        <name>Ca(2+)</name>
        <dbReference type="ChEBI" id="CHEBI:29108"/>
    </ligand>
</feature>
<feature type="binding site" evidence="2">
    <location>
        <position position="289"/>
    </location>
    <ligand>
        <name>Ca(2+)</name>
        <dbReference type="ChEBI" id="CHEBI:29108"/>
    </ligand>
</feature>
<feature type="binding site" evidence="2">
    <location>
        <position position="291"/>
    </location>
    <ligand>
        <name>Ca(2+)</name>
        <dbReference type="ChEBI" id="CHEBI:29108"/>
    </ligand>
</feature>
<feature type="binding site" evidence="2">
    <location>
        <position position="293"/>
    </location>
    <ligand>
        <name>Ca(2+)</name>
        <dbReference type="ChEBI" id="CHEBI:29108"/>
    </ligand>
</feature>
<protein>
    <recommendedName>
        <fullName>E3 ubiquitin-protein ligase cblA</fullName>
        <ecNumber evidence="8">2.3.2.27</ecNumber>
    </recommendedName>
    <alternativeName>
        <fullName>Cbl-like protein A</fullName>
    </alternativeName>
    <alternativeName>
        <fullName>RING finger protein cblA</fullName>
    </alternativeName>
    <alternativeName>
        <fullName evidence="8">RING-type E3 ubiquitin transferase cblA</fullName>
    </alternativeName>
</protein>
<dbReference type="EC" id="2.3.2.27" evidence="8"/>
<dbReference type="EMBL" id="AAFI02000011">
    <property type="protein sequence ID" value="EAL70495.1"/>
    <property type="molecule type" value="Genomic_DNA"/>
</dbReference>
<dbReference type="EMBL" id="AAFI02000009">
    <property type="protein sequence ID" value="EAL70788.1"/>
    <property type="molecule type" value="Genomic_DNA"/>
</dbReference>
<dbReference type="RefSeq" id="XP_644421.1">
    <property type="nucleotide sequence ID" value="XM_639329.1"/>
</dbReference>
<dbReference type="RefSeq" id="XP_644829.1">
    <property type="nucleotide sequence ID" value="XM_639737.1"/>
</dbReference>
<dbReference type="SMR" id="Q557E7"/>
<dbReference type="FunCoup" id="Q557E7">
    <property type="interactions" value="176"/>
</dbReference>
<dbReference type="STRING" id="44689.Q557E7"/>
<dbReference type="PaxDb" id="44689-DDB0238372"/>
<dbReference type="EnsemblProtists" id="EAL70495">
    <property type="protein sequence ID" value="EAL70495"/>
    <property type="gene ID" value="DDB_G0273609"/>
</dbReference>
<dbReference type="EnsemblProtists" id="EAL70788">
    <property type="protein sequence ID" value="EAL70788"/>
    <property type="gene ID" value="DDB_G0273141"/>
</dbReference>
<dbReference type="GeneID" id="8618931"/>
<dbReference type="GeneID" id="8619046"/>
<dbReference type="KEGG" id="ddi:DDB_G0273141"/>
<dbReference type="KEGG" id="ddi:DDB_G0273609"/>
<dbReference type="dictyBase" id="DDB_G0273141">
    <property type="gene designation" value="cblA-1"/>
</dbReference>
<dbReference type="dictyBase" id="DDB_G0273609">
    <property type="gene designation" value="cblA-2"/>
</dbReference>
<dbReference type="VEuPathDB" id="AmoebaDB:DDB_G0273609"/>
<dbReference type="eggNOG" id="KOG1571">
    <property type="taxonomic scope" value="Eukaryota"/>
</dbReference>
<dbReference type="HOGENOM" id="CLU_413020_0_0_1"/>
<dbReference type="InParanoid" id="Q557E7"/>
<dbReference type="OMA" id="YIIRFSK"/>
<dbReference type="Reactome" id="R-DDI-983168">
    <property type="pathway name" value="Antigen processing: Ubiquitination &amp; Proteasome degradation"/>
</dbReference>
<dbReference type="UniPathway" id="UPA00143"/>
<dbReference type="PRO" id="PR:Q557E7"/>
<dbReference type="Proteomes" id="UP000002195">
    <property type="component" value="Chromosome 2"/>
</dbReference>
<dbReference type="GO" id="GO:0005829">
    <property type="term" value="C:cytosol"/>
    <property type="evidence" value="ECO:0000314"/>
    <property type="project" value="dictyBase"/>
</dbReference>
<dbReference type="GO" id="GO:0005634">
    <property type="term" value="C:nucleus"/>
    <property type="evidence" value="ECO:0007669"/>
    <property type="project" value="UniProtKB-SubCell"/>
</dbReference>
<dbReference type="GO" id="GO:0005509">
    <property type="term" value="F:calcium ion binding"/>
    <property type="evidence" value="ECO:0007669"/>
    <property type="project" value="InterPro"/>
</dbReference>
<dbReference type="GO" id="GO:0001784">
    <property type="term" value="F:phosphotyrosine residue binding"/>
    <property type="evidence" value="ECO:0007669"/>
    <property type="project" value="InterPro"/>
</dbReference>
<dbReference type="GO" id="GO:0016740">
    <property type="term" value="F:transferase activity"/>
    <property type="evidence" value="ECO:0007669"/>
    <property type="project" value="UniProtKB-KW"/>
</dbReference>
<dbReference type="GO" id="GO:0008270">
    <property type="term" value="F:zinc ion binding"/>
    <property type="evidence" value="ECO:0007669"/>
    <property type="project" value="UniProtKB-KW"/>
</dbReference>
<dbReference type="GO" id="GO:0035556">
    <property type="term" value="P:intracellular signal transduction"/>
    <property type="evidence" value="ECO:0000315"/>
    <property type="project" value="dictyBase"/>
</dbReference>
<dbReference type="GO" id="GO:0016567">
    <property type="term" value="P:protein ubiquitination"/>
    <property type="evidence" value="ECO:0007669"/>
    <property type="project" value="UniProtKB-UniPathway"/>
</dbReference>
<dbReference type="GO" id="GO:0030587">
    <property type="term" value="P:sorocarp development"/>
    <property type="evidence" value="ECO:0000315"/>
    <property type="project" value="dictyBase"/>
</dbReference>
<dbReference type="CDD" id="cd16501">
    <property type="entry name" value="RING-HC_CblA-like"/>
    <property type="match status" value="1"/>
</dbReference>
<dbReference type="CDD" id="cd00173">
    <property type="entry name" value="SH2"/>
    <property type="match status" value="1"/>
</dbReference>
<dbReference type="FunFam" id="1.10.1170.10:FF:000002">
    <property type="entry name" value="Baculoviral IAP repeat containing 7"/>
    <property type="match status" value="1"/>
</dbReference>
<dbReference type="FunFam" id="1.10.238.10:FF:000594">
    <property type="entry name" value="Suppressor of LIneage defect"/>
    <property type="match status" value="1"/>
</dbReference>
<dbReference type="Gene3D" id="1.10.238.10">
    <property type="entry name" value="EF-hand"/>
    <property type="match status" value="1"/>
</dbReference>
<dbReference type="Gene3D" id="3.30.505.10">
    <property type="entry name" value="SH2 domain"/>
    <property type="match status" value="1"/>
</dbReference>
<dbReference type="Gene3D" id="3.30.40.10">
    <property type="entry name" value="Zinc/RING finger domain, C3HC4 (zinc finger)"/>
    <property type="match status" value="1"/>
</dbReference>
<dbReference type="InterPro" id="IPR014741">
    <property type="entry name" value="Adaptor_Cbl_EF_hand-like"/>
</dbReference>
<dbReference type="InterPro" id="IPR024159">
    <property type="entry name" value="Cbl_PTB"/>
</dbReference>
<dbReference type="InterPro" id="IPR011992">
    <property type="entry name" value="EF-hand-dom_pair"/>
</dbReference>
<dbReference type="InterPro" id="IPR000980">
    <property type="entry name" value="SH2"/>
</dbReference>
<dbReference type="InterPro" id="IPR036860">
    <property type="entry name" value="SH2_dom_sf"/>
</dbReference>
<dbReference type="InterPro" id="IPR001841">
    <property type="entry name" value="Znf_RING"/>
</dbReference>
<dbReference type="InterPro" id="IPR013083">
    <property type="entry name" value="Znf_RING/FYVE/PHD"/>
</dbReference>
<dbReference type="PANTHER" id="PTHR36911:SF1">
    <property type="entry name" value="LIM ZINC-BINDING DOMAIN-CONTAINING PROTEIN"/>
    <property type="match status" value="1"/>
</dbReference>
<dbReference type="PANTHER" id="PTHR36911">
    <property type="entry name" value="LIM ZINC-BINDING DOMAIN-CONTAINING PROTEIN-RELATED"/>
    <property type="match status" value="1"/>
</dbReference>
<dbReference type="Pfam" id="PF02761">
    <property type="entry name" value="Cbl_N2"/>
    <property type="match status" value="1"/>
</dbReference>
<dbReference type="Pfam" id="PF00017">
    <property type="entry name" value="SH2"/>
    <property type="match status" value="1"/>
</dbReference>
<dbReference type="Pfam" id="PF13920">
    <property type="entry name" value="zf-C3HC4_3"/>
    <property type="match status" value="1"/>
</dbReference>
<dbReference type="SMART" id="SM00184">
    <property type="entry name" value="RING"/>
    <property type="match status" value="1"/>
</dbReference>
<dbReference type="SMART" id="SM00252">
    <property type="entry name" value="SH2"/>
    <property type="match status" value="1"/>
</dbReference>
<dbReference type="SUPFAM" id="SSF47473">
    <property type="entry name" value="EF-hand"/>
    <property type="match status" value="1"/>
</dbReference>
<dbReference type="SUPFAM" id="SSF57850">
    <property type="entry name" value="RING/U-box"/>
    <property type="match status" value="1"/>
</dbReference>
<dbReference type="SUPFAM" id="SSF55550">
    <property type="entry name" value="SH2 domain"/>
    <property type="match status" value="1"/>
</dbReference>
<dbReference type="PROSITE" id="PS51506">
    <property type="entry name" value="CBL_PTB"/>
    <property type="match status" value="1"/>
</dbReference>
<dbReference type="PROSITE" id="PS50089">
    <property type="entry name" value="ZF_RING_2"/>
    <property type="match status" value="1"/>
</dbReference>
<comment type="function">
    <text evidence="7">Acts as an E3 ubiquitin-protein ligase, which accepts ubiquitin from specific E2 ubiquitin-conjugating enzymes, and then transfers it to substrates promoting their degradation by the proteasome. Up-regulates STATc tyrosine phosphorylation via an inhibitory effect on ptpC accumulation. Recognizes activated receptor tyrosine kinases, RTKs and terminates signaling.</text>
</comment>
<comment type="catalytic activity">
    <reaction evidence="8">
        <text>S-ubiquitinyl-[E2 ubiquitin-conjugating enzyme]-L-cysteine + [acceptor protein]-L-lysine = [E2 ubiquitin-conjugating enzyme]-L-cysteine + N(6)-ubiquitinyl-[acceptor protein]-L-lysine.</text>
        <dbReference type="EC" id="2.3.2.27"/>
    </reaction>
</comment>
<comment type="pathway">
    <text>Protein modification; protein ubiquitination.</text>
</comment>
<comment type="subcellular location">
    <subcellularLocation>
        <location evidence="7">Cytoplasm</location>
    </subcellularLocation>
    <subcellularLocation>
        <location evidence="7">Nucleus</location>
    </subcellularLocation>
    <text>A very small proportion appears to be nuclear but this may reflect cytoplasmic contamination of the nuclei.</text>
</comment>
<comment type="developmental stage">
    <text evidence="7">Expressed in the slug stages (at protein level). Expressed at a relatively low level in growing cells. Accumulates during the first few hours of development, to reach a plateau during aggregation.</text>
</comment>
<comment type="domain">
    <text evidence="1">The RING-type zinc finger domain mediates binding to an E2 ubiquitin-conjugating enzyme.</text>
</comment>
<comment type="domain">
    <text evidence="5">The N-terminus is composed of the phosphotyrosine binding (PTB) domain, a short linker region and the RING-type zinc finger. The PTB domain, which is also called TKB (tyrosine kinase binding) domain, is composed of three different subdomains: a four-helix bundle (4H), a calcium-binding EF hand and a divergent SH2 domain.</text>
</comment>
<comment type="PTM">
    <text evidence="8">Ubiquitinated.</text>
</comment>
<comment type="disruption phenotype">
    <text evidence="7">Migrating slugs frequently fragment and the basal disk of the culminants that are formed are absent or much reduced.</text>
</comment>
<comment type="caution">
    <text evidence="8">The gene for this protein is duplicated in strains AX3 and AX4. These strains contain a duplication of a segment of 750 kb of chromosome 2 compared to the corresponding sequence in strain AX2.</text>
</comment>
<organism>
    <name type="scientific">Dictyostelium discoideum</name>
    <name type="common">Social amoeba</name>
    <dbReference type="NCBI Taxonomy" id="44689"/>
    <lineage>
        <taxon>Eukaryota</taxon>
        <taxon>Amoebozoa</taxon>
        <taxon>Evosea</taxon>
        <taxon>Eumycetozoa</taxon>
        <taxon>Dictyostelia</taxon>
        <taxon>Dictyosteliales</taxon>
        <taxon>Dictyosteliaceae</taxon>
        <taxon>Dictyostelium</taxon>
    </lineage>
</organism>